<keyword id="KW-0378">Hydrolase</keyword>
<keyword id="KW-0460">Magnesium</keyword>
<keyword id="KW-0479">Metal-binding</keyword>
<proteinExistence type="inferred from homology"/>
<evidence type="ECO:0000255" key="1">
    <source>
        <dbReference type="HAMAP-Rule" id="MF_01568"/>
    </source>
</evidence>
<reference key="1">
    <citation type="journal article" date="2005" name="J. Bacteriol.">
        <title>Whole-genome sequencing of Staphylococcus haemolyticus uncovers the extreme plasticity of its genome and the evolution of human-colonizing staphylococcal species.</title>
        <authorList>
            <person name="Takeuchi F."/>
            <person name="Watanabe S."/>
            <person name="Baba T."/>
            <person name="Yuzawa H."/>
            <person name="Ito T."/>
            <person name="Morimoto Y."/>
            <person name="Kuroda M."/>
            <person name="Cui L."/>
            <person name="Takahashi M."/>
            <person name="Ankai A."/>
            <person name="Baba S."/>
            <person name="Fukui S."/>
            <person name="Lee J.C."/>
            <person name="Hiramatsu K."/>
        </authorList>
    </citation>
    <scope>NUCLEOTIDE SEQUENCE [LARGE SCALE GENOMIC DNA]</scope>
    <source>
        <strain>JCSC1435</strain>
    </source>
</reference>
<organism>
    <name type="scientific">Staphylococcus haemolyticus (strain JCSC1435)</name>
    <dbReference type="NCBI Taxonomy" id="279808"/>
    <lineage>
        <taxon>Bacteria</taxon>
        <taxon>Bacillati</taxon>
        <taxon>Bacillota</taxon>
        <taxon>Bacilli</taxon>
        <taxon>Bacillales</taxon>
        <taxon>Staphylococcaceae</taxon>
        <taxon>Staphylococcus</taxon>
    </lineage>
</organism>
<protein>
    <recommendedName>
        <fullName evidence="1">Nucleoside triphosphate/diphosphate phosphatase</fullName>
        <ecNumber evidence="1">3.6.1.15</ecNumber>
        <ecNumber evidence="1">3.6.1.6</ecNumber>
    </recommendedName>
</protein>
<dbReference type="EC" id="3.6.1.15" evidence="1"/>
<dbReference type="EC" id="3.6.1.6" evidence="1"/>
<dbReference type="EMBL" id="AP006716">
    <property type="protein sequence ID" value="BAE04403.1"/>
    <property type="molecule type" value="Genomic_DNA"/>
</dbReference>
<dbReference type="RefSeq" id="WP_011275396.1">
    <property type="nucleotide sequence ID" value="NC_007168.1"/>
</dbReference>
<dbReference type="SMR" id="Q4L7H2"/>
<dbReference type="KEGG" id="sha:SH1094"/>
<dbReference type="eggNOG" id="COG3557">
    <property type="taxonomic scope" value="Bacteria"/>
</dbReference>
<dbReference type="HOGENOM" id="CLU_109787_1_0_9"/>
<dbReference type="OrthoDB" id="1645325at2"/>
<dbReference type="Proteomes" id="UP000000543">
    <property type="component" value="Chromosome"/>
</dbReference>
<dbReference type="GO" id="GO:0000287">
    <property type="term" value="F:magnesium ion binding"/>
    <property type="evidence" value="ECO:0007669"/>
    <property type="project" value="UniProtKB-UniRule"/>
</dbReference>
<dbReference type="GO" id="GO:0017110">
    <property type="term" value="F:nucleoside diphosphate phosphatase activity"/>
    <property type="evidence" value="ECO:0007669"/>
    <property type="project" value="UniProtKB-UniRule"/>
</dbReference>
<dbReference type="GO" id="GO:0017111">
    <property type="term" value="F:ribonucleoside triphosphate phosphatase activity"/>
    <property type="evidence" value="ECO:0007669"/>
    <property type="project" value="UniProtKB-UniRule"/>
</dbReference>
<dbReference type="Gene3D" id="2.40.380.10">
    <property type="entry name" value="FomD-like"/>
    <property type="match status" value="1"/>
</dbReference>
<dbReference type="HAMAP" id="MF_01568">
    <property type="entry name" value="Ntdp"/>
    <property type="match status" value="1"/>
</dbReference>
<dbReference type="InterPro" id="IPR007295">
    <property type="entry name" value="DUF402"/>
</dbReference>
<dbReference type="InterPro" id="IPR035930">
    <property type="entry name" value="FomD-like_sf"/>
</dbReference>
<dbReference type="InterPro" id="IPR050212">
    <property type="entry name" value="Ntdp-like"/>
</dbReference>
<dbReference type="InterPro" id="IPR016882">
    <property type="entry name" value="SA1684"/>
</dbReference>
<dbReference type="NCBIfam" id="NF010183">
    <property type="entry name" value="PRK13662.1"/>
    <property type="match status" value="1"/>
</dbReference>
<dbReference type="PANTHER" id="PTHR39159">
    <property type="match status" value="1"/>
</dbReference>
<dbReference type="PANTHER" id="PTHR39159:SF1">
    <property type="entry name" value="UPF0374 PROTEIN YGAC"/>
    <property type="match status" value="1"/>
</dbReference>
<dbReference type="Pfam" id="PF04167">
    <property type="entry name" value="DUF402"/>
    <property type="match status" value="1"/>
</dbReference>
<dbReference type="PIRSF" id="PIRSF028345">
    <property type="entry name" value="UCP028345"/>
    <property type="match status" value="1"/>
</dbReference>
<dbReference type="SUPFAM" id="SSF159234">
    <property type="entry name" value="FomD-like"/>
    <property type="match status" value="1"/>
</dbReference>
<feature type="chain" id="PRO_0000248115" description="Nucleoside triphosphate/diphosphate phosphatase">
    <location>
        <begin position="1"/>
        <end position="180"/>
    </location>
</feature>
<feature type="active site" description="Proton donor" evidence="1">
    <location>
        <position position="26"/>
    </location>
</feature>
<feature type="binding site" evidence="1">
    <location>
        <position position="90"/>
    </location>
    <ligand>
        <name>Mg(2+)</name>
        <dbReference type="ChEBI" id="CHEBI:18420"/>
        <label>1</label>
    </ligand>
</feature>
<feature type="binding site" evidence="1">
    <location>
        <position position="106"/>
    </location>
    <ligand>
        <name>Mg(2+)</name>
        <dbReference type="ChEBI" id="CHEBI:18420"/>
        <label>1</label>
    </ligand>
</feature>
<feature type="binding site" evidence="1">
    <location>
        <position position="108"/>
    </location>
    <ligand>
        <name>Mg(2+)</name>
        <dbReference type="ChEBI" id="CHEBI:18420"/>
        <label>2</label>
    </ligand>
</feature>
<feature type="binding site" evidence="1">
    <location>
        <position position="110"/>
    </location>
    <ligand>
        <name>Mg(2+)</name>
        <dbReference type="ChEBI" id="CHEBI:18420"/>
        <label>1</label>
    </ligand>
</feature>
<feature type="binding site" evidence="1">
    <location>
        <position position="110"/>
    </location>
    <ligand>
        <name>Mg(2+)</name>
        <dbReference type="ChEBI" id="CHEBI:18420"/>
        <label>2</label>
    </ligand>
</feature>
<feature type="binding site" evidence="1">
    <location>
        <position position="123"/>
    </location>
    <ligand>
        <name>Mg(2+)</name>
        <dbReference type="ChEBI" id="CHEBI:18420"/>
        <label>2</label>
    </ligand>
</feature>
<feature type="binding site" evidence="1">
    <location>
        <position position="126"/>
    </location>
    <ligand>
        <name>Mg(2+)</name>
        <dbReference type="ChEBI" id="CHEBI:18420"/>
        <label>2</label>
    </ligand>
</feature>
<gene>
    <name type="ordered locus">SH1094</name>
</gene>
<sequence>MVKESIPKEGENIKIQSYKHDGNIHRVWSETTILKGTDHVIIGGNDHTLVTESDGRTWITREPAIVYFHSEFWFNVICMFREDGIYYYCNLSSPFVCDEEALKYIDYDLDIKVYPNGKYHLLDEDEYEQHMNQMNYPHDIDVILRRNVDILQQWIEQKKGPFAPDFIKVWKERYKKIRNY</sequence>
<comment type="function">
    <text evidence="1">Has nucleoside phosphatase activity towards nucleoside triphosphates and nucleoside diphosphates.</text>
</comment>
<comment type="catalytic activity">
    <reaction evidence="1">
        <text>a ribonucleoside 5'-triphosphate + H2O = a ribonucleoside 5'-diphosphate + phosphate + H(+)</text>
        <dbReference type="Rhea" id="RHEA:23680"/>
        <dbReference type="ChEBI" id="CHEBI:15377"/>
        <dbReference type="ChEBI" id="CHEBI:15378"/>
        <dbReference type="ChEBI" id="CHEBI:43474"/>
        <dbReference type="ChEBI" id="CHEBI:57930"/>
        <dbReference type="ChEBI" id="CHEBI:61557"/>
        <dbReference type="EC" id="3.6.1.15"/>
    </reaction>
</comment>
<comment type="catalytic activity">
    <reaction evidence="1">
        <text>a ribonucleoside 5'-diphosphate + H2O = a ribonucleoside 5'-phosphate + phosphate + H(+)</text>
        <dbReference type="Rhea" id="RHEA:36799"/>
        <dbReference type="ChEBI" id="CHEBI:15377"/>
        <dbReference type="ChEBI" id="CHEBI:15378"/>
        <dbReference type="ChEBI" id="CHEBI:43474"/>
        <dbReference type="ChEBI" id="CHEBI:57930"/>
        <dbReference type="ChEBI" id="CHEBI:58043"/>
        <dbReference type="EC" id="3.6.1.6"/>
    </reaction>
</comment>
<comment type="cofactor">
    <cofactor evidence="1">
        <name>Mg(2+)</name>
        <dbReference type="ChEBI" id="CHEBI:18420"/>
    </cofactor>
</comment>
<comment type="similarity">
    <text evidence="1">Belongs to the Ntdp family.</text>
</comment>
<name>NTDP_STAHJ</name>
<accession>Q4L7H2</accession>